<protein>
    <recommendedName>
        <fullName evidence="1">ADP-L-glycero-D-manno-heptose-6-epimerase</fullName>
        <ecNumber evidence="1">5.1.3.20</ecNumber>
    </recommendedName>
    <alternativeName>
        <fullName evidence="1">ADP-L-glycero-beta-D-manno-heptose-6-epimerase</fullName>
        <shortName evidence="1">ADP-glyceromanno-heptose 6-epimerase</shortName>
        <shortName evidence="1">ADP-hep 6-epimerase</shortName>
        <shortName evidence="1">AGME</shortName>
    </alternativeName>
</protein>
<comment type="function">
    <text evidence="1">Catalyzes the interconversion between ADP-D-glycero-beta-D-manno-heptose and ADP-L-glycero-beta-D-manno-heptose via an epimerization at carbon 6 of the heptose.</text>
</comment>
<comment type="catalytic activity">
    <reaction evidence="1">
        <text>ADP-D-glycero-beta-D-manno-heptose = ADP-L-glycero-beta-D-manno-heptose</text>
        <dbReference type="Rhea" id="RHEA:17577"/>
        <dbReference type="ChEBI" id="CHEBI:59967"/>
        <dbReference type="ChEBI" id="CHEBI:61506"/>
        <dbReference type="EC" id="5.1.3.20"/>
    </reaction>
</comment>
<comment type="cofactor">
    <cofactor evidence="1">
        <name>NADP(+)</name>
        <dbReference type="ChEBI" id="CHEBI:58349"/>
    </cofactor>
    <text evidence="1">Binds 1 NADP(+) per subunit.</text>
</comment>
<comment type="pathway">
    <text evidence="1">Nucleotide-sugar biosynthesis; ADP-L-glycero-beta-D-manno-heptose biosynthesis; ADP-L-glycero-beta-D-manno-heptose from D-glycero-beta-D-manno-heptose 7-phosphate: step 4/4.</text>
</comment>
<comment type="subunit">
    <text evidence="1">Homopentamer.</text>
</comment>
<comment type="domain">
    <text evidence="1">Contains a large N-terminal NADP-binding domain, and a smaller C-terminal substrate-binding domain.</text>
</comment>
<comment type="similarity">
    <text evidence="1">Belongs to the NAD(P)-dependent epimerase/dehydratase family. HldD subfamily.</text>
</comment>
<dbReference type="EC" id="5.1.3.20" evidence="1"/>
<dbReference type="EMBL" id="CP000086">
    <property type="protein sequence ID" value="ABC38509.1"/>
    <property type="molecule type" value="Genomic_DNA"/>
</dbReference>
<dbReference type="PDB" id="4EJ0">
    <property type="method" value="X-ray"/>
    <property type="resolution" value="2.61 A"/>
    <property type="chains" value="A/B/C/D/E/F/G/H/I/J=1-330"/>
</dbReference>
<dbReference type="PDBsum" id="4EJ0"/>
<dbReference type="SMR" id="Q2SY18"/>
<dbReference type="GeneID" id="45121375"/>
<dbReference type="KEGG" id="bte:BTH_I1644"/>
<dbReference type="HOGENOM" id="CLU_007383_1_3_4"/>
<dbReference type="BRENDA" id="5.1.3.20">
    <property type="organism ID" value="8156"/>
</dbReference>
<dbReference type="UniPathway" id="UPA00356">
    <property type="reaction ID" value="UER00440"/>
</dbReference>
<dbReference type="EvolutionaryTrace" id="Q2SY18"/>
<dbReference type="Proteomes" id="UP000001930">
    <property type="component" value="Chromosome I"/>
</dbReference>
<dbReference type="GO" id="GO:0008712">
    <property type="term" value="F:ADP-glyceromanno-heptose 6-epimerase activity"/>
    <property type="evidence" value="ECO:0007669"/>
    <property type="project" value="UniProtKB-UniRule"/>
</dbReference>
<dbReference type="GO" id="GO:0050661">
    <property type="term" value="F:NADP binding"/>
    <property type="evidence" value="ECO:0007669"/>
    <property type="project" value="InterPro"/>
</dbReference>
<dbReference type="GO" id="GO:0097171">
    <property type="term" value="P:ADP-L-glycero-beta-D-manno-heptose biosynthetic process"/>
    <property type="evidence" value="ECO:0007669"/>
    <property type="project" value="UniProtKB-UniPathway"/>
</dbReference>
<dbReference type="GO" id="GO:0005975">
    <property type="term" value="P:carbohydrate metabolic process"/>
    <property type="evidence" value="ECO:0007669"/>
    <property type="project" value="UniProtKB-UniRule"/>
</dbReference>
<dbReference type="CDD" id="cd05248">
    <property type="entry name" value="ADP_GME_SDR_e"/>
    <property type="match status" value="1"/>
</dbReference>
<dbReference type="Gene3D" id="3.40.50.720">
    <property type="entry name" value="NAD(P)-binding Rossmann-like Domain"/>
    <property type="match status" value="1"/>
</dbReference>
<dbReference type="Gene3D" id="3.90.25.10">
    <property type="entry name" value="UDP-galactose 4-epimerase, domain 1"/>
    <property type="match status" value="1"/>
</dbReference>
<dbReference type="HAMAP" id="MF_01601">
    <property type="entry name" value="Heptose_epimerase"/>
    <property type="match status" value="1"/>
</dbReference>
<dbReference type="InterPro" id="IPR001509">
    <property type="entry name" value="Epimerase_deHydtase"/>
</dbReference>
<dbReference type="InterPro" id="IPR011912">
    <property type="entry name" value="Heptose_epim"/>
</dbReference>
<dbReference type="InterPro" id="IPR036291">
    <property type="entry name" value="NAD(P)-bd_dom_sf"/>
</dbReference>
<dbReference type="NCBIfam" id="TIGR02197">
    <property type="entry name" value="heptose_epim"/>
    <property type="match status" value="1"/>
</dbReference>
<dbReference type="PANTHER" id="PTHR43103:SF3">
    <property type="entry name" value="ADP-L-GLYCERO-D-MANNO-HEPTOSE-6-EPIMERASE"/>
    <property type="match status" value="1"/>
</dbReference>
<dbReference type="PANTHER" id="PTHR43103">
    <property type="entry name" value="NUCLEOSIDE-DIPHOSPHATE-SUGAR EPIMERASE"/>
    <property type="match status" value="1"/>
</dbReference>
<dbReference type="Pfam" id="PF01370">
    <property type="entry name" value="Epimerase"/>
    <property type="match status" value="1"/>
</dbReference>
<dbReference type="SUPFAM" id="SSF51735">
    <property type="entry name" value="NAD(P)-binding Rossmann-fold domains"/>
    <property type="match status" value="1"/>
</dbReference>
<proteinExistence type="evidence at protein level"/>
<organism>
    <name type="scientific">Burkholderia thailandensis (strain ATCC 700388 / DSM 13276 / CCUG 48851 / CIP 106301 / E264)</name>
    <dbReference type="NCBI Taxonomy" id="271848"/>
    <lineage>
        <taxon>Bacteria</taxon>
        <taxon>Pseudomonadati</taxon>
        <taxon>Pseudomonadota</taxon>
        <taxon>Betaproteobacteria</taxon>
        <taxon>Burkholderiales</taxon>
        <taxon>Burkholderiaceae</taxon>
        <taxon>Burkholderia</taxon>
        <taxon>pseudomallei group</taxon>
    </lineage>
</organism>
<accession>Q2SY18</accession>
<keyword id="KW-0002">3D-structure</keyword>
<keyword id="KW-0119">Carbohydrate metabolism</keyword>
<keyword id="KW-0413">Isomerase</keyword>
<keyword id="KW-0521">NADP</keyword>
<gene>
    <name evidence="1" type="primary">hldD</name>
    <name type="ordered locus">BTH_I1644</name>
</gene>
<reference key="1">
    <citation type="journal article" date="2005" name="BMC Genomics">
        <title>Bacterial genome adaptation to niches: divergence of the potential virulence genes in three Burkholderia species of different survival strategies.</title>
        <authorList>
            <person name="Kim H.S."/>
            <person name="Schell M.A."/>
            <person name="Yu Y."/>
            <person name="Ulrich R.L."/>
            <person name="Sarria S.H."/>
            <person name="Nierman W.C."/>
            <person name="DeShazer D."/>
        </authorList>
    </citation>
    <scope>NUCLEOTIDE SEQUENCE [LARGE SCALE GENOMIC DNA]</scope>
    <source>
        <strain>ATCC 700388 / DSM 13276 / CCUG 48851 / CIP 106301 / E264</strain>
    </source>
</reference>
<sequence>MTLIVTGAAGFIGANLVKALNERGETRIIAVDNLTRADKFKNLVDCEIDDYLDKTEFVERFARGDFGKVRAVFHEGACSDTMETDGRYMMDNNFRYSRAVLDACLAQGAQFLYASSAAIYGGSSRFVEEREVEAPLNVYGYSKFLFDQVIRRVMPGAKSQIAGFRYFNVYGPRESHKGRMASVAFHNFNQFRAEGKVKLFGEYSGYGPGEQTRDFVSVEDVAKVNLYFFDHPEKSGIFNLGTGRAQPFNDIAATVVNTLRALEGQPALTLAEQVEQGLVEYVPFPDALRGKYQCFTQADQTKLRAAGYDAPFLTVQEGVDRYVRWLFGQL</sequence>
<evidence type="ECO:0000255" key="1">
    <source>
        <dbReference type="HAMAP-Rule" id="MF_01601"/>
    </source>
</evidence>
<evidence type="ECO:0007829" key="2">
    <source>
        <dbReference type="PDB" id="4EJ0"/>
    </source>
</evidence>
<feature type="chain" id="PRO_0000255724" description="ADP-L-glycero-D-manno-heptose-6-epimerase">
    <location>
        <begin position="1"/>
        <end position="330"/>
    </location>
</feature>
<feature type="active site" description="Proton acceptor" evidence="1">
    <location>
        <position position="139"/>
    </location>
</feature>
<feature type="active site" description="Proton acceptor" evidence="1">
    <location>
        <position position="177"/>
    </location>
</feature>
<feature type="binding site" evidence="1">
    <location>
        <begin position="11"/>
        <end position="12"/>
    </location>
    <ligand>
        <name>NADP(+)</name>
        <dbReference type="ChEBI" id="CHEBI:58349"/>
    </ligand>
</feature>
<feature type="binding site" evidence="1">
    <location>
        <begin position="32"/>
        <end position="33"/>
    </location>
    <ligand>
        <name>NADP(+)</name>
        <dbReference type="ChEBI" id="CHEBI:58349"/>
    </ligand>
</feature>
<feature type="binding site" evidence="1">
    <location>
        <position position="39"/>
    </location>
    <ligand>
        <name>NADP(+)</name>
        <dbReference type="ChEBI" id="CHEBI:58349"/>
    </ligand>
</feature>
<feature type="binding site" evidence="1">
    <location>
        <position position="54"/>
    </location>
    <ligand>
        <name>NADP(+)</name>
        <dbReference type="ChEBI" id="CHEBI:58349"/>
    </ligand>
</feature>
<feature type="binding site" evidence="1">
    <location>
        <begin position="75"/>
        <end position="79"/>
    </location>
    <ligand>
        <name>NADP(+)</name>
        <dbReference type="ChEBI" id="CHEBI:58349"/>
    </ligand>
</feature>
<feature type="binding site" evidence="1">
    <location>
        <position position="92"/>
    </location>
    <ligand>
        <name>NADP(+)</name>
        <dbReference type="ChEBI" id="CHEBI:58349"/>
    </ligand>
</feature>
<feature type="binding site" evidence="1">
    <location>
        <position position="143"/>
    </location>
    <ligand>
        <name>NADP(+)</name>
        <dbReference type="ChEBI" id="CHEBI:58349"/>
    </ligand>
</feature>
<feature type="binding site" evidence="1">
    <location>
        <position position="168"/>
    </location>
    <ligand>
        <name>substrate</name>
    </ligand>
</feature>
<feature type="binding site" evidence="1">
    <location>
        <position position="169"/>
    </location>
    <ligand>
        <name>NADP(+)</name>
        <dbReference type="ChEBI" id="CHEBI:58349"/>
    </ligand>
</feature>
<feature type="binding site" evidence="1">
    <location>
        <position position="177"/>
    </location>
    <ligand>
        <name>NADP(+)</name>
        <dbReference type="ChEBI" id="CHEBI:58349"/>
    </ligand>
</feature>
<feature type="binding site" evidence="1">
    <location>
        <position position="179"/>
    </location>
    <ligand>
        <name>substrate</name>
    </ligand>
</feature>
<feature type="binding site" evidence="1">
    <location>
        <position position="186"/>
    </location>
    <ligand>
        <name>substrate</name>
    </ligand>
</feature>
<feature type="binding site" evidence="1">
    <location>
        <begin position="200"/>
        <end position="203"/>
    </location>
    <ligand>
        <name>substrate</name>
    </ligand>
</feature>
<feature type="binding site" evidence="1">
    <location>
        <position position="213"/>
    </location>
    <ligand>
        <name>substrate</name>
    </ligand>
</feature>
<feature type="binding site" evidence="1">
    <location>
        <position position="292"/>
    </location>
    <ligand>
        <name>substrate</name>
    </ligand>
</feature>
<feature type="strand" evidence="2">
    <location>
        <begin position="2"/>
        <end position="6"/>
    </location>
</feature>
<feature type="turn" evidence="2">
    <location>
        <begin position="7"/>
        <end position="9"/>
    </location>
</feature>
<feature type="helix" evidence="2">
    <location>
        <begin position="11"/>
        <end position="22"/>
    </location>
</feature>
<feature type="strand" evidence="2">
    <location>
        <begin position="28"/>
        <end position="32"/>
    </location>
</feature>
<feature type="helix" evidence="2">
    <location>
        <begin position="37"/>
        <end position="43"/>
    </location>
</feature>
<feature type="strand" evidence="2">
    <location>
        <begin position="49"/>
        <end position="53"/>
    </location>
</feature>
<feature type="helix" evidence="2">
    <location>
        <begin position="54"/>
        <end position="62"/>
    </location>
</feature>
<feature type="turn" evidence="2">
    <location>
        <begin position="63"/>
        <end position="66"/>
    </location>
</feature>
<feature type="strand" evidence="2">
    <location>
        <begin position="68"/>
        <end position="74"/>
    </location>
</feature>
<feature type="helix" evidence="2">
    <location>
        <begin position="86"/>
        <end position="92"/>
    </location>
</feature>
<feature type="helix" evidence="2">
    <location>
        <begin position="94"/>
        <end position="107"/>
    </location>
</feature>
<feature type="strand" evidence="2">
    <location>
        <begin position="110"/>
        <end position="116"/>
    </location>
</feature>
<feature type="helix" evidence="2">
    <location>
        <begin position="117"/>
        <end position="120"/>
    </location>
</feature>
<feature type="helix" evidence="2">
    <location>
        <begin position="130"/>
        <end position="132"/>
    </location>
</feature>
<feature type="helix" evidence="2">
    <location>
        <begin position="138"/>
        <end position="153"/>
    </location>
</feature>
<feature type="helix" evidence="2">
    <location>
        <begin position="154"/>
        <end position="156"/>
    </location>
</feature>
<feature type="strand" evidence="2">
    <location>
        <begin position="161"/>
        <end position="166"/>
    </location>
</feature>
<feature type="strand" evidence="2">
    <location>
        <begin position="168"/>
        <end position="173"/>
    </location>
</feature>
<feature type="helix" evidence="2">
    <location>
        <begin position="175"/>
        <end position="180"/>
    </location>
</feature>
<feature type="helix" evidence="2">
    <location>
        <begin position="183"/>
        <end position="194"/>
    </location>
</feature>
<feature type="strand" evidence="2">
    <location>
        <begin position="197"/>
        <end position="200"/>
    </location>
</feature>
<feature type="strand" evidence="2">
    <location>
        <begin position="212"/>
        <end position="217"/>
    </location>
</feature>
<feature type="helix" evidence="2">
    <location>
        <begin position="218"/>
        <end position="229"/>
    </location>
</feature>
<feature type="strand" evidence="2">
    <location>
        <begin position="236"/>
        <end position="241"/>
    </location>
</feature>
<feature type="strand" evidence="2">
    <location>
        <begin position="245"/>
        <end position="247"/>
    </location>
</feature>
<feature type="helix" evidence="2">
    <location>
        <begin position="248"/>
        <end position="261"/>
    </location>
</feature>
<feature type="turn" evidence="2">
    <location>
        <begin position="262"/>
        <end position="264"/>
    </location>
</feature>
<feature type="helix" evidence="2">
    <location>
        <begin position="270"/>
        <end position="275"/>
    </location>
</feature>
<feature type="strand" evidence="2">
    <location>
        <begin position="278"/>
        <end position="282"/>
    </location>
</feature>
<feature type="helix" evidence="2">
    <location>
        <begin position="286"/>
        <end position="288"/>
    </location>
</feature>
<feature type="helix" evidence="2">
    <location>
        <begin position="301"/>
        <end position="305"/>
    </location>
</feature>
<feature type="helix" evidence="2">
    <location>
        <begin position="315"/>
        <end position="327"/>
    </location>
</feature>
<name>HLDD_BURTA</name>